<sequence length="379" mass="38605">MTPPHNYLAVIKVVGIGGGGVNAVNRMIEQGLKGVEFMAINTDAQALLMSDADVKLDVGRDSTRGLGAGADPEVGRKAAEDAKDEIEELLRGADMVFVTAGEGGGTGTGGAPVIASIARKLGALTVGVVTRPFSFEGKRRSNQAENGIAALRESCDTLIVIPNDRLLQMGDTAVSLMDAFRSADEVLLNGVQGITDLITTPGLINVDFADVKGIMSGAGTALMGIGSARGDGRSLKAAEIAINSPLLEASMEGAQGVLMSIAGGSDLGLFEINEAASLVQDAAHPDANIIFGTVIDDSLGDEVRVTVIAAGFEANGPGRTPVMGSTGGAHRIESAKAGALTSTLFEPVDAASAPLHTNGAALSIGGDDDDVDVPPFMRR</sequence>
<name>FTSZ_MYCLE</name>
<evidence type="ECO:0000255" key="1">
    <source>
        <dbReference type="HAMAP-Rule" id="MF_00909"/>
    </source>
</evidence>
<reference key="1">
    <citation type="journal article" date="2001" name="Nature">
        <title>Massive gene decay in the leprosy bacillus.</title>
        <authorList>
            <person name="Cole S.T."/>
            <person name="Eiglmeier K."/>
            <person name="Parkhill J."/>
            <person name="James K.D."/>
            <person name="Thomson N.R."/>
            <person name="Wheeler P.R."/>
            <person name="Honore N."/>
            <person name="Garnier T."/>
            <person name="Churcher C.M."/>
            <person name="Harris D.E."/>
            <person name="Mungall K.L."/>
            <person name="Basham D."/>
            <person name="Brown D."/>
            <person name="Chillingworth T."/>
            <person name="Connor R."/>
            <person name="Davies R.M."/>
            <person name="Devlin K."/>
            <person name="Duthoy S."/>
            <person name="Feltwell T."/>
            <person name="Fraser A."/>
            <person name="Hamlin N."/>
            <person name="Holroyd S."/>
            <person name="Hornsby T."/>
            <person name="Jagels K."/>
            <person name="Lacroix C."/>
            <person name="Maclean J."/>
            <person name="Moule S."/>
            <person name="Murphy L.D."/>
            <person name="Oliver K."/>
            <person name="Quail M.A."/>
            <person name="Rajandream M.A."/>
            <person name="Rutherford K.M."/>
            <person name="Rutter S."/>
            <person name="Seeger K."/>
            <person name="Simon S."/>
            <person name="Simmonds M."/>
            <person name="Skelton J."/>
            <person name="Squares R."/>
            <person name="Squares S."/>
            <person name="Stevens K."/>
            <person name="Taylor K."/>
            <person name="Whitehead S."/>
            <person name="Woodward J.R."/>
            <person name="Barrell B.G."/>
        </authorList>
    </citation>
    <scope>NUCLEOTIDE SEQUENCE [LARGE SCALE GENOMIC DNA]</scope>
    <source>
        <strain>TN</strain>
    </source>
</reference>
<accession>Q9CCE4</accession>
<gene>
    <name evidence="1" type="primary">ftsZ</name>
    <name type="ordered locus">ML0917</name>
</gene>
<protein>
    <recommendedName>
        <fullName evidence="1">Cell division protein FtsZ</fullName>
    </recommendedName>
</protein>
<feature type="chain" id="PRO_0000114364" description="Cell division protein FtsZ">
    <location>
        <begin position="1"/>
        <end position="379"/>
    </location>
</feature>
<feature type="binding site" evidence="1">
    <location>
        <begin position="18"/>
        <end position="22"/>
    </location>
    <ligand>
        <name>GTP</name>
        <dbReference type="ChEBI" id="CHEBI:37565"/>
    </ligand>
</feature>
<feature type="binding site" evidence="1">
    <location>
        <begin position="105"/>
        <end position="107"/>
    </location>
    <ligand>
        <name>GTP</name>
        <dbReference type="ChEBI" id="CHEBI:37565"/>
    </ligand>
</feature>
<feature type="binding site" evidence="1">
    <location>
        <position position="136"/>
    </location>
    <ligand>
        <name>GTP</name>
        <dbReference type="ChEBI" id="CHEBI:37565"/>
    </ligand>
</feature>
<feature type="binding site" evidence="1">
    <location>
        <position position="140"/>
    </location>
    <ligand>
        <name>GTP</name>
        <dbReference type="ChEBI" id="CHEBI:37565"/>
    </ligand>
</feature>
<feature type="binding site" evidence="1">
    <location>
        <position position="184"/>
    </location>
    <ligand>
        <name>GTP</name>
        <dbReference type="ChEBI" id="CHEBI:37565"/>
    </ligand>
</feature>
<keyword id="KW-0131">Cell cycle</keyword>
<keyword id="KW-0132">Cell division</keyword>
<keyword id="KW-0963">Cytoplasm</keyword>
<keyword id="KW-0342">GTP-binding</keyword>
<keyword id="KW-0547">Nucleotide-binding</keyword>
<keyword id="KW-1185">Reference proteome</keyword>
<keyword id="KW-0717">Septation</keyword>
<proteinExistence type="inferred from homology"/>
<organism>
    <name type="scientific">Mycobacterium leprae (strain TN)</name>
    <dbReference type="NCBI Taxonomy" id="272631"/>
    <lineage>
        <taxon>Bacteria</taxon>
        <taxon>Bacillati</taxon>
        <taxon>Actinomycetota</taxon>
        <taxon>Actinomycetes</taxon>
        <taxon>Mycobacteriales</taxon>
        <taxon>Mycobacteriaceae</taxon>
        <taxon>Mycobacterium</taxon>
    </lineage>
</organism>
<comment type="function">
    <text evidence="1">Essential cell division protein that forms a contractile ring structure (Z ring) at the future cell division site. The regulation of the ring assembly controls the timing and the location of cell division. One of the functions of the FtsZ ring is to recruit other cell division proteins to the septum to produce a new cell wall between the dividing cells. Binds GTP and shows GTPase activity.</text>
</comment>
<comment type="subunit">
    <text evidence="1">Homodimer. Polymerizes to form a dynamic ring structure in a strictly GTP-dependent manner. Interacts directly with several other division proteins.</text>
</comment>
<comment type="subcellular location">
    <subcellularLocation>
        <location evidence="1">Cytoplasm</location>
    </subcellularLocation>
    <text evidence="1">Assembles at midcell at the inner surface of the cytoplasmic membrane.</text>
</comment>
<comment type="similarity">
    <text evidence="1">Belongs to the FtsZ family.</text>
</comment>
<dbReference type="EMBL" id="AL583920">
    <property type="protein sequence ID" value="CAC31298.1"/>
    <property type="molecule type" value="Genomic_DNA"/>
</dbReference>
<dbReference type="PIR" id="G87023">
    <property type="entry name" value="G87023"/>
</dbReference>
<dbReference type="RefSeq" id="NP_301700.1">
    <property type="nucleotide sequence ID" value="NC_002677.1"/>
</dbReference>
<dbReference type="RefSeq" id="WP_010908024.1">
    <property type="nucleotide sequence ID" value="NC_002677.1"/>
</dbReference>
<dbReference type="SMR" id="Q9CCE4"/>
<dbReference type="STRING" id="272631.gene:17574743"/>
<dbReference type="KEGG" id="mle:ML0917"/>
<dbReference type="PATRIC" id="fig|272631.5.peg.1660"/>
<dbReference type="Leproma" id="ML0917"/>
<dbReference type="eggNOG" id="COG0206">
    <property type="taxonomic scope" value="Bacteria"/>
</dbReference>
<dbReference type="HOGENOM" id="CLU_024865_0_1_11"/>
<dbReference type="OrthoDB" id="9813375at2"/>
<dbReference type="Proteomes" id="UP000000806">
    <property type="component" value="Chromosome"/>
</dbReference>
<dbReference type="GO" id="GO:0032153">
    <property type="term" value="C:cell division site"/>
    <property type="evidence" value="ECO:0007669"/>
    <property type="project" value="UniProtKB-UniRule"/>
</dbReference>
<dbReference type="GO" id="GO:0005737">
    <property type="term" value="C:cytoplasm"/>
    <property type="evidence" value="ECO:0007669"/>
    <property type="project" value="UniProtKB-SubCell"/>
</dbReference>
<dbReference type="GO" id="GO:0005525">
    <property type="term" value="F:GTP binding"/>
    <property type="evidence" value="ECO:0007669"/>
    <property type="project" value="UniProtKB-UniRule"/>
</dbReference>
<dbReference type="GO" id="GO:0003924">
    <property type="term" value="F:GTPase activity"/>
    <property type="evidence" value="ECO:0007669"/>
    <property type="project" value="UniProtKB-UniRule"/>
</dbReference>
<dbReference type="GO" id="GO:0000917">
    <property type="term" value="P:division septum assembly"/>
    <property type="evidence" value="ECO:0007669"/>
    <property type="project" value="UniProtKB-KW"/>
</dbReference>
<dbReference type="GO" id="GO:0043093">
    <property type="term" value="P:FtsZ-dependent cytokinesis"/>
    <property type="evidence" value="ECO:0007669"/>
    <property type="project" value="UniProtKB-UniRule"/>
</dbReference>
<dbReference type="GO" id="GO:0051258">
    <property type="term" value="P:protein polymerization"/>
    <property type="evidence" value="ECO:0007669"/>
    <property type="project" value="UniProtKB-UniRule"/>
</dbReference>
<dbReference type="CDD" id="cd02201">
    <property type="entry name" value="FtsZ_type1"/>
    <property type="match status" value="1"/>
</dbReference>
<dbReference type="FunFam" id="3.30.1330.20:FF:000005">
    <property type="entry name" value="Cell division protein FtsZ"/>
    <property type="match status" value="1"/>
</dbReference>
<dbReference type="FunFam" id="3.40.50.1440:FF:000001">
    <property type="entry name" value="Cell division protein FtsZ"/>
    <property type="match status" value="1"/>
</dbReference>
<dbReference type="Gene3D" id="3.30.1330.20">
    <property type="entry name" value="Tubulin/FtsZ, C-terminal domain"/>
    <property type="match status" value="1"/>
</dbReference>
<dbReference type="Gene3D" id="3.40.50.1440">
    <property type="entry name" value="Tubulin/FtsZ, GTPase domain"/>
    <property type="match status" value="1"/>
</dbReference>
<dbReference type="HAMAP" id="MF_00909">
    <property type="entry name" value="FtsZ"/>
    <property type="match status" value="1"/>
</dbReference>
<dbReference type="InterPro" id="IPR000158">
    <property type="entry name" value="Cell_div_FtsZ"/>
</dbReference>
<dbReference type="InterPro" id="IPR020805">
    <property type="entry name" value="Cell_div_FtsZ_CS"/>
</dbReference>
<dbReference type="InterPro" id="IPR045061">
    <property type="entry name" value="FtsZ/CetZ"/>
</dbReference>
<dbReference type="InterPro" id="IPR024757">
    <property type="entry name" value="FtsZ_C"/>
</dbReference>
<dbReference type="InterPro" id="IPR008280">
    <property type="entry name" value="Tub_FtsZ_C"/>
</dbReference>
<dbReference type="InterPro" id="IPR037103">
    <property type="entry name" value="Tubulin/FtsZ-like_C"/>
</dbReference>
<dbReference type="InterPro" id="IPR018316">
    <property type="entry name" value="Tubulin/FtsZ_2-layer-sand-dom"/>
</dbReference>
<dbReference type="InterPro" id="IPR036525">
    <property type="entry name" value="Tubulin/FtsZ_GTPase_sf"/>
</dbReference>
<dbReference type="InterPro" id="IPR003008">
    <property type="entry name" value="Tubulin_FtsZ_GTPase"/>
</dbReference>
<dbReference type="NCBIfam" id="TIGR00065">
    <property type="entry name" value="ftsZ"/>
    <property type="match status" value="1"/>
</dbReference>
<dbReference type="PANTHER" id="PTHR30314">
    <property type="entry name" value="CELL DIVISION PROTEIN FTSZ-RELATED"/>
    <property type="match status" value="1"/>
</dbReference>
<dbReference type="PANTHER" id="PTHR30314:SF3">
    <property type="entry name" value="MITOCHONDRIAL DIVISION PROTEIN FSZA"/>
    <property type="match status" value="1"/>
</dbReference>
<dbReference type="Pfam" id="PF12327">
    <property type="entry name" value="FtsZ_C"/>
    <property type="match status" value="1"/>
</dbReference>
<dbReference type="Pfam" id="PF00091">
    <property type="entry name" value="Tubulin"/>
    <property type="match status" value="1"/>
</dbReference>
<dbReference type="PRINTS" id="PR00423">
    <property type="entry name" value="CELLDVISFTSZ"/>
</dbReference>
<dbReference type="SMART" id="SM00864">
    <property type="entry name" value="Tubulin"/>
    <property type="match status" value="1"/>
</dbReference>
<dbReference type="SMART" id="SM00865">
    <property type="entry name" value="Tubulin_C"/>
    <property type="match status" value="1"/>
</dbReference>
<dbReference type="SUPFAM" id="SSF55307">
    <property type="entry name" value="Tubulin C-terminal domain-like"/>
    <property type="match status" value="1"/>
</dbReference>
<dbReference type="SUPFAM" id="SSF52490">
    <property type="entry name" value="Tubulin nucleotide-binding domain-like"/>
    <property type="match status" value="1"/>
</dbReference>
<dbReference type="PROSITE" id="PS01134">
    <property type="entry name" value="FTSZ_1"/>
    <property type="match status" value="1"/>
</dbReference>
<dbReference type="PROSITE" id="PS01135">
    <property type="entry name" value="FTSZ_2"/>
    <property type="match status" value="1"/>
</dbReference>